<reference key="1">
    <citation type="journal article" date="2006" name="Nat. Biotechnol.">
        <title>Complete genome of the mutualistic, N2-fixing grass endophyte Azoarcus sp. strain BH72.</title>
        <authorList>
            <person name="Krause A."/>
            <person name="Ramakumar A."/>
            <person name="Bartels D."/>
            <person name="Battistoni F."/>
            <person name="Bekel T."/>
            <person name="Boch J."/>
            <person name="Boehm M."/>
            <person name="Friedrich F."/>
            <person name="Hurek T."/>
            <person name="Krause L."/>
            <person name="Linke B."/>
            <person name="McHardy A.C."/>
            <person name="Sarkar A."/>
            <person name="Schneiker S."/>
            <person name="Syed A.A."/>
            <person name="Thauer R."/>
            <person name="Vorhoelter F.-J."/>
            <person name="Weidner S."/>
            <person name="Puehler A."/>
            <person name="Reinhold-Hurek B."/>
            <person name="Kaiser O."/>
            <person name="Goesmann A."/>
        </authorList>
    </citation>
    <scope>NUCLEOTIDE SEQUENCE [LARGE SCALE GENOMIC DNA]</scope>
    <source>
        <strain>BH72</strain>
    </source>
</reference>
<evidence type="ECO:0000255" key="1">
    <source>
        <dbReference type="HAMAP-Rule" id="MF_00121"/>
    </source>
</evidence>
<gene>
    <name evidence="1" type="primary">gatB</name>
    <name type="ordered locus">azo0170</name>
</gene>
<feature type="chain" id="PRO_1000015933" description="Aspartyl/glutamyl-tRNA(Asn/Gln) amidotransferase subunit B">
    <location>
        <begin position="1"/>
        <end position="486"/>
    </location>
</feature>
<comment type="function">
    <text evidence="1">Allows the formation of correctly charged Asn-tRNA(Asn) or Gln-tRNA(Gln) through the transamidation of misacylated Asp-tRNA(Asn) or Glu-tRNA(Gln) in organisms which lack either or both of asparaginyl-tRNA or glutaminyl-tRNA synthetases. The reaction takes place in the presence of glutamine and ATP through an activated phospho-Asp-tRNA(Asn) or phospho-Glu-tRNA(Gln).</text>
</comment>
<comment type="catalytic activity">
    <reaction evidence="1">
        <text>L-glutamyl-tRNA(Gln) + L-glutamine + ATP + H2O = L-glutaminyl-tRNA(Gln) + L-glutamate + ADP + phosphate + H(+)</text>
        <dbReference type="Rhea" id="RHEA:17521"/>
        <dbReference type="Rhea" id="RHEA-COMP:9681"/>
        <dbReference type="Rhea" id="RHEA-COMP:9684"/>
        <dbReference type="ChEBI" id="CHEBI:15377"/>
        <dbReference type="ChEBI" id="CHEBI:15378"/>
        <dbReference type="ChEBI" id="CHEBI:29985"/>
        <dbReference type="ChEBI" id="CHEBI:30616"/>
        <dbReference type="ChEBI" id="CHEBI:43474"/>
        <dbReference type="ChEBI" id="CHEBI:58359"/>
        <dbReference type="ChEBI" id="CHEBI:78520"/>
        <dbReference type="ChEBI" id="CHEBI:78521"/>
        <dbReference type="ChEBI" id="CHEBI:456216"/>
    </reaction>
</comment>
<comment type="catalytic activity">
    <reaction evidence="1">
        <text>L-aspartyl-tRNA(Asn) + L-glutamine + ATP + H2O = L-asparaginyl-tRNA(Asn) + L-glutamate + ADP + phosphate + 2 H(+)</text>
        <dbReference type="Rhea" id="RHEA:14513"/>
        <dbReference type="Rhea" id="RHEA-COMP:9674"/>
        <dbReference type="Rhea" id="RHEA-COMP:9677"/>
        <dbReference type="ChEBI" id="CHEBI:15377"/>
        <dbReference type="ChEBI" id="CHEBI:15378"/>
        <dbReference type="ChEBI" id="CHEBI:29985"/>
        <dbReference type="ChEBI" id="CHEBI:30616"/>
        <dbReference type="ChEBI" id="CHEBI:43474"/>
        <dbReference type="ChEBI" id="CHEBI:58359"/>
        <dbReference type="ChEBI" id="CHEBI:78515"/>
        <dbReference type="ChEBI" id="CHEBI:78516"/>
        <dbReference type="ChEBI" id="CHEBI:456216"/>
    </reaction>
</comment>
<comment type="subunit">
    <text evidence="1">Heterotrimer of A, B and C subunits.</text>
</comment>
<comment type="similarity">
    <text evidence="1">Belongs to the GatB/GatE family. GatB subfamily.</text>
</comment>
<organism>
    <name type="scientific">Azoarcus sp. (strain BH72)</name>
    <dbReference type="NCBI Taxonomy" id="418699"/>
    <lineage>
        <taxon>Bacteria</taxon>
        <taxon>Pseudomonadati</taxon>
        <taxon>Pseudomonadota</taxon>
        <taxon>Betaproteobacteria</taxon>
        <taxon>Rhodocyclales</taxon>
        <taxon>Zoogloeaceae</taxon>
        <taxon>Azoarcus</taxon>
    </lineage>
</organism>
<protein>
    <recommendedName>
        <fullName evidence="1">Aspartyl/glutamyl-tRNA(Asn/Gln) amidotransferase subunit B</fullName>
        <shortName evidence="1">Asp/Glu-ADT subunit B</shortName>
        <ecNumber evidence="1">6.3.5.-</ecNumber>
    </recommendedName>
</protein>
<sequence length="486" mass="52678">MSRSDWEVVIGLEVHAQLNTASKIFSGASTAFGAEPNVQASAVDIALPGVLPVLNRGAVERAIRFGLAIGATVAPTSVFARKNYFYPDLPKGYQISQFELPVVQGGTITIRVGEGENAYEKTVNLTRAHLEEDAGKSLHEDFHGMSGIDLNRAGTPLLEIVSEPDMRSSAEAVAYARTLHALVRWIDICDGNMQEGSFRCDANVSVRKKGAEKFGTRREIKNLNSFRFLQQAIDYEVQWQIDTIEDGGTIQQATVLFDPDTGETRMMRSKEDAHDYRYFPDPDLLPLVISPEWKARVQGEMPELPEAMKARFIEQLGLSAYDATTLTASKEVATYYQATVDAAGAALAKPCANWVMGDLAARLNKAELDIAVSPVSPAQLAGLVARIADNTISNAIAKKVFEALWNGEGASADEIIDKQGLKQVTDSGAIEAMIDEVLAANQKSVEEFRAGKDKAFNALVGQVMKASKGKASPAQVNELLKKKLAG</sequence>
<proteinExistence type="inferred from homology"/>
<accession>A1K1T3</accession>
<name>GATB_AZOSB</name>
<dbReference type="EC" id="6.3.5.-" evidence="1"/>
<dbReference type="EMBL" id="AM406670">
    <property type="protein sequence ID" value="CAL92788.1"/>
    <property type="molecule type" value="Genomic_DNA"/>
</dbReference>
<dbReference type="RefSeq" id="WP_011763906.1">
    <property type="nucleotide sequence ID" value="NC_008702.1"/>
</dbReference>
<dbReference type="SMR" id="A1K1T3"/>
<dbReference type="STRING" id="62928.azo0170"/>
<dbReference type="KEGG" id="azo:azo0170"/>
<dbReference type="eggNOG" id="COG0064">
    <property type="taxonomic scope" value="Bacteria"/>
</dbReference>
<dbReference type="HOGENOM" id="CLU_019240_0_0_4"/>
<dbReference type="Proteomes" id="UP000002588">
    <property type="component" value="Chromosome"/>
</dbReference>
<dbReference type="GO" id="GO:0050566">
    <property type="term" value="F:asparaginyl-tRNA synthase (glutamine-hydrolyzing) activity"/>
    <property type="evidence" value="ECO:0007669"/>
    <property type="project" value="RHEA"/>
</dbReference>
<dbReference type="GO" id="GO:0005524">
    <property type="term" value="F:ATP binding"/>
    <property type="evidence" value="ECO:0007669"/>
    <property type="project" value="UniProtKB-KW"/>
</dbReference>
<dbReference type="GO" id="GO:0050567">
    <property type="term" value="F:glutaminyl-tRNA synthase (glutamine-hydrolyzing) activity"/>
    <property type="evidence" value="ECO:0007669"/>
    <property type="project" value="UniProtKB-UniRule"/>
</dbReference>
<dbReference type="GO" id="GO:0070681">
    <property type="term" value="P:glutaminyl-tRNAGln biosynthesis via transamidation"/>
    <property type="evidence" value="ECO:0007669"/>
    <property type="project" value="TreeGrafter"/>
</dbReference>
<dbReference type="GO" id="GO:0006412">
    <property type="term" value="P:translation"/>
    <property type="evidence" value="ECO:0007669"/>
    <property type="project" value="UniProtKB-UniRule"/>
</dbReference>
<dbReference type="FunFam" id="1.10.10.410:FF:000001">
    <property type="entry name" value="Aspartyl/glutamyl-tRNA(Asn/Gln) amidotransferase subunit B"/>
    <property type="match status" value="1"/>
</dbReference>
<dbReference type="FunFam" id="1.10.150.380:FF:000001">
    <property type="entry name" value="Aspartyl/glutamyl-tRNA(Asn/Gln) amidotransferase subunit B"/>
    <property type="match status" value="1"/>
</dbReference>
<dbReference type="Gene3D" id="1.10.10.410">
    <property type="match status" value="1"/>
</dbReference>
<dbReference type="Gene3D" id="1.10.150.380">
    <property type="entry name" value="GatB domain, N-terminal subdomain"/>
    <property type="match status" value="1"/>
</dbReference>
<dbReference type="HAMAP" id="MF_00121">
    <property type="entry name" value="GatB"/>
    <property type="match status" value="1"/>
</dbReference>
<dbReference type="InterPro" id="IPR017959">
    <property type="entry name" value="Asn/Gln-tRNA_amidoTrfase_suB/E"/>
</dbReference>
<dbReference type="InterPro" id="IPR006075">
    <property type="entry name" value="Asn/Gln-tRNA_Trfase_suB/E_cat"/>
</dbReference>
<dbReference type="InterPro" id="IPR018027">
    <property type="entry name" value="Asn/Gln_amidotransferase"/>
</dbReference>
<dbReference type="InterPro" id="IPR003789">
    <property type="entry name" value="Asn/Gln_tRNA_amidoTrase-B-like"/>
</dbReference>
<dbReference type="InterPro" id="IPR004413">
    <property type="entry name" value="GatB"/>
</dbReference>
<dbReference type="InterPro" id="IPR042114">
    <property type="entry name" value="GatB_C_1"/>
</dbReference>
<dbReference type="InterPro" id="IPR023168">
    <property type="entry name" value="GatB_Yqey_C_2"/>
</dbReference>
<dbReference type="InterPro" id="IPR017958">
    <property type="entry name" value="Gln-tRNA_amidoTrfase_suB_CS"/>
</dbReference>
<dbReference type="InterPro" id="IPR014746">
    <property type="entry name" value="Gln_synth/guanido_kin_cat_dom"/>
</dbReference>
<dbReference type="NCBIfam" id="TIGR00133">
    <property type="entry name" value="gatB"/>
    <property type="match status" value="1"/>
</dbReference>
<dbReference type="NCBIfam" id="NF004012">
    <property type="entry name" value="PRK05477.1-2"/>
    <property type="match status" value="1"/>
</dbReference>
<dbReference type="NCBIfam" id="NF004014">
    <property type="entry name" value="PRK05477.1-4"/>
    <property type="match status" value="1"/>
</dbReference>
<dbReference type="NCBIfam" id="NF004015">
    <property type="entry name" value="PRK05477.1-5"/>
    <property type="match status" value="1"/>
</dbReference>
<dbReference type="PANTHER" id="PTHR11659">
    <property type="entry name" value="GLUTAMYL-TRNA GLN AMIDOTRANSFERASE SUBUNIT B MITOCHONDRIAL AND PROKARYOTIC PET112-RELATED"/>
    <property type="match status" value="1"/>
</dbReference>
<dbReference type="PANTHER" id="PTHR11659:SF0">
    <property type="entry name" value="GLUTAMYL-TRNA(GLN) AMIDOTRANSFERASE SUBUNIT B, MITOCHONDRIAL"/>
    <property type="match status" value="1"/>
</dbReference>
<dbReference type="Pfam" id="PF02934">
    <property type="entry name" value="GatB_N"/>
    <property type="match status" value="1"/>
</dbReference>
<dbReference type="Pfam" id="PF02637">
    <property type="entry name" value="GatB_Yqey"/>
    <property type="match status" value="1"/>
</dbReference>
<dbReference type="SMART" id="SM00845">
    <property type="entry name" value="GatB_Yqey"/>
    <property type="match status" value="1"/>
</dbReference>
<dbReference type="SUPFAM" id="SSF89095">
    <property type="entry name" value="GatB/YqeY motif"/>
    <property type="match status" value="1"/>
</dbReference>
<dbReference type="SUPFAM" id="SSF55931">
    <property type="entry name" value="Glutamine synthetase/guanido kinase"/>
    <property type="match status" value="1"/>
</dbReference>
<dbReference type="PROSITE" id="PS01234">
    <property type="entry name" value="GATB"/>
    <property type="match status" value="1"/>
</dbReference>
<keyword id="KW-0067">ATP-binding</keyword>
<keyword id="KW-0436">Ligase</keyword>
<keyword id="KW-0547">Nucleotide-binding</keyword>
<keyword id="KW-0648">Protein biosynthesis</keyword>
<keyword id="KW-1185">Reference proteome</keyword>